<gene>
    <name evidence="1" type="primary">purO</name>
    <name type="ordered locus">MmarC6_1363</name>
</gene>
<keyword id="KW-0378">Hydrolase</keyword>
<keyword id="KW-0658">Purine biosynthesis</keyword>
<sequence>MYIGRFLVLGKTEEGYPFVTYRVSSRSFPNRVAKVMDDNTVAILPKELEEMFKNPYITYNCVKLVGDVAVATNGSHTDIIADKIKLGLPIRDALSYSLLTMDYEKDDYNTPRIAVVLTKDSAYMGYVTDSDVRIKKVELEAGKAYYLAVYEACNITKHQEISVTGKTAEEVTKFVMDYEKFEKPVTAATVLVKDGFKLATL</sequence>
<dbReference type="EC" id="3.5.4.10" evidence="1"/>
<dbReference type="EMBL" id="CP000867">
    <property type="protein sequence ID" value="ABX02176.1"/>
    <property type="molecule type" value="Genomic_DNA"/>
</dbReference>
<dbReference type="SMR" id="A9AA03"/>
<dbReference type="STRING" id="444158.MmarC6_1363"/>
<dbReference type="KEGG" id="mmx:MmarC6_1363"/>
<dbReference type="eggNOG" id="arCOG04727">
    <property type="taxonomic scope" value="Archaea"/>
</dbReference>
<dbReference type="HOGENOM" id="CLU_1352116_0_0_2"/>
<dbReference type="OrthoDB" id="92928at2157"/>
<dbReference type="PhylomeDB" id="A9AA03"/>
<dbReference type="UniPathway" id="UPA00074">
    <property type="reaction ID" value="UER00135"/>
</dbReference>
<dbReference type="GO" id="GO:0003937">
    <property type="term" value="F:IMP cyclohydrolase activity"/>
    <property type="evidence" value="ECO:0007669"/>
    <property type="project" value="UniProtKB-UniRule"/>
</dbReference>
<dbReference type="GO" id="GO:0006189">
    <property type="term" value="P:'de novo' IMP biosynthetic process"/>
    <property type="evidence" value="ECO:0007669"/>
    <property type="project" value="UniProtKB-UniRule"/>
</dbReference>
<dbReference type="Gene3D" id="3.60.20.20">
    <property type="entry name" value="Inosine monophosphate cyclohydrolase-like"/>
    <property type="match status" value="1"/>
</dbReference>
<dbReference type="HAMAP" id="MF_00705">
    <property type="entry name" value="IMP_cyclohydrol"/>
    <property type="match status" value="1"/>
</dbReference>
<dbReference type="InterPro" id="IPR010191">
    <property type="entry name" value="IMP_cyclohydrolase"/>
</dbReference>
<dbReference type="InterPro" id="IPR020600">
    <property type="entry name" value="IMP_cyclohydrolase-like"/>
</dbReference>
<dbReference type="InterPro" id="IPR036795">
    <property type="entry name" value="IMP_cyclohydrolase-like_sf"/>
</dbReference>
<dbReference type="NCBIfam" id="NF003167">
    <property type="entry name" value="PRK04151.1"/>
    <property type="match status" value="1"/>
</dbReference>
<dbReference type="NCBIfam" id="TIGR01922">
    <property type="entry name" value="purO_arch"/>
    <property type="match status" value="1"/>
</dbReference>
<dbReference type="Pfam" id="PF07826">
    <property type="entry name" value="IMP_cyclohyd"/>
    <property type="match status" value="1"/>
</dbReference>
<dbReference type="PIRSF" id="PIRSF004866">
    <property type="entry name" value="IMP_cclhdr_arch"/>
    <property type="match status" value="1"/>
</dbReference>
<dbReference type="SUPFAM" id="SSF75569">
    <property type="entry name" value="Archaeal IMP cyclohydrolase PurO"/>
    <property type="match status" value="1"/>
</dbReference>
<evidence type="ECO:0000255" key="1">
    <source>
        <dbReference type="HAMAP-Rule" id="MF_00705"/>
    </source>
</evidence>
<proteinExistence type="inferred from homology"/>
<name>PURO_METM6</name>
<comment type="function">
    <text evidence="1">Catalyzes the cyclization of 5-formylamidoimidazole-4-carboxamide ribonucleotide to IMP.</text>
</comment>
<comment type="catalytic activity">
    <reaction evidence="1">
        <text>IMP + H2O = 5-formamido-1-(5-phospho-D-ribosyl)imidazole-4-carboxamide</text>
        <dbReference type="Rhea" id="RHEA:18445"/>
        <dbReference type="ChEBI" id="CHEBI:15377"/>
        <dbReference type="ChEBI" id="CHEBI:58053"/>
        <dbReference type="ChEBI" id="CHEBI:58467"/>
        <dbReference type="EC" id="3.5.4.10"/>
    </reaction>
</comment>
<comment type="pathway">
    <text evidence="1">Purine metabolism; IMP biosynthesis via de novo pathway; IMP from 5-formamido-1-(5-phospho-D-ribosyl)imidazole-4-carboxamide: step 1/1.</text>
</comment>
<comment type="similarity">
    <text evidence="1">Belongs to the archaeal IMP cyclohydrolase family.</text>
</comment>
<protein>
    <recommendedName>
        <fullName evidence="1">IMP cyclohydrolase</fullName>
        <ecNumber evidence="1">3.5.4.10</ecNumber>
    </recommendedName>
    <alternativeName>
        <fullName evidence="1">IMP synthase</fullName>
    </alternativeName>
    <alternativeName>
        <fullName evidence="1">Inosinicase</fullName>
    </alternativeName>
</protein>
<reference key="1">
    <citation type="submission" date="2007-10" db="EMBL/GenBank/DDBJ databases">
        <title>Complete sequence of Methanococcus maripaludis C6.</title>
        <authorList>
            <consortium name="US DOE Joint Genome Institute"/>
            <person name="Copeland A."/>
            <person name="Lucas S."/>
            <person name="Lapidus A."/>
            <person name="Barry K."/>
            <person name="Glavina del Rio T."/>
            <person name="Dalin E."/>
            <person name="Tice H."/>
            <person name="Pitluck S."/>
            <person name="Clum A."/>
            <person name="Schmutz J."/>
            <person name="Larimer F."/>
            <person name="Land M."/>
            <person name="Hauser L."/>
            <person name="Kyrpides N."/>
            <person name="Mikhailova N."/>
            <person name="Sieprawska-Lupa M."/>
            <person name="Whitman W.B."/>
            <person name="Richardson P."/>
        </authorList>
    </citation>
    <scope>NUCLEOTIDE SEQUENCE [LARGE SCALE GENOMIC DNA]</scope>
    <source>
        <strain>C6 / ATCC BAA-1332</strain>
    </source>
</reference>
<accession>A9AA03</accession>
<feature type="chain" id="PRO_0000349164" description="IMP cyclohydrolase">
    <location>
        <begin position="1"/>
        <end position="201"/>
    </location>
</feature>
<organism>
    <name type="scientific">Methanococcus maripaludis (strain C6 / ATCC BAA-1332)</name>
    <dbReference type="NCBI Taxonomy" id="444158"/>
    <lineage>
        <taxon>Archaea</taxon>
        <taxon>Methanobacteriati</taxon>
        <taxon>Methanobacteriota</taxon>
        <taxon>Methanomada group</taxon>
        <taxon>Methanococci</taxon>
        <taxon>Methanococcales</taxon>
        <taxon>Methanococcaceae</taxon>
        <taxon>Methanococcus</taxon>
    </lineage>
</organism>